<gene>
    <name type="primary">TXNIP</name>
    <name type="synonym">VDUP1</name>
</gene>
<reference key="1">
    <citation type="journal article" date="1994" name="Biochim. Biophys. Acta">
        <title>Isolation and characterization of a novel cDNA from HL-60 cells treated with 1,25-dihydroxyvitamin D-3.</title>
        <authorList>
            <person name="Chen K.-S."/>
            <person name="DeLuca H.F."/>
        </authorList>
    </citation>
    <scope>NUCLEOTIDE SEQUENCE [MRNA] (ISOFORM 1)</scope>
    <scope>INDUCTION</scope>
</reference>
<reference key="2">
    <citation type="journal article" date="2007" name="Exp. Eye Res.">
        <title>Regulation of the bioavailability of thioredoxin in the lens by a specific thioredoxin-binding protein (TBP-2).</title>
        <authorList>
            <person name="Liyanage N.P.M."/>
            <person name="Fernando M.R."/>
            <person name="Lou M.F."/>
        </authorList>
    </citation>
    <scope>NUCLEOTIDE SEQUENCE [MRNA] (ISOFORM 1)</scope>
    <scope>FUNCTION</scope>
    <scope>INTERACTION WITH TXN</scope>
    <scope>INDUCTION</scope>
    <source>
        <tissue>Lens</tissue>
    </source>
</reference>
<reference key="3">
    <citation type="submission" date="2000-12" db="EMBL/GenBank/DDBJ databases">
        <title>Homo sapiens VDUP1 gene.</title>
        <authorList>
            <person name="Toyama S."/>
        </authorList>
    </citation>
    <scope>NUCLEOTIDE SEQUENCE [GENOMIC DNA]</scope>
</reference>
<reference key="4">
    <citation type="journal article" date="2004" name="Nat. Genet.">
        <title>Complete sequencing and characterization of 21,243 full-length human cDNAs.</title>
        <authorList>
            <person name="Ota T."/>
            <person name="Suzuki Y."/>
            <person name="Nishikawa T."/>
            <person name="Otsuki T."/>
            <person name="Sugiyama T."/>
            <person name="Irie R."/>
            <person name="Wakamatsu A."/>
            <person name="Hayashi K."/>
            <person name="Sato H."/>
            <person name="Nagai K."/>
            <person name="Kimura K."/>
            <person name="Makita H."/>
            <person name="Sekine M."/>
            <person name="Obayashi M."/>
            <person name="Nishi T."/>
            <person name="Shibahara T."/>
            <person name="Tanaka T."/>
            <person name="Ishii S."/>
            <person name="Yamamoto J."/>
            <person name="Saito K."/>
            <person name="Kawai Y."/>
            <person name="Isono Y."/>
            <person name="Nakamura Y."/>
            <person name="Nagahari K."/>
            <person name="Murakami K."/>
            <person name="Yasuda T."/>
            <person name="Iwayanagi T."/>
            <person name="Wagatsuma M."/>
            <person name="Shiratori A."/>
            <person name="Sudo H."/>
            <person name="Hosoiri T."/>
            <person name="Kaku Y."/>
            <person name="Kodaira H."/>
            <person name="Kondo H."/>
            <person name="Sugawara M."/>
            <person name="Takahashi M."/>
            <person name="Kanda K."/>
            <person name="Yokoi T."/>
            <person name="Furuya T."/>
            <person name="Kikkawa E."/>
            <person name="Omura Y."/>
            <person name="Abe K."/>
            <person name="Kamihara K."/>
            <person name="Katsuta N."/>
            <person name="Sato K."/>
            <person name="Tanikawa M."/>
            <person name="Yamazaki M."/>
            <person name="Ninomiya K."/>
            <person name="Ishibashi T."/>
            <person name="Yamashita H."/>
            <person name="Murakawa K."/>
            <person name="Fujimori K."/>
            <person name="Tanai H."/>
            <person name="Kimata M."/>
            <person name="Watanabe M."/>
            <person name="Hiraoka S."/>
            <person name="Chiba Y."/>
            <person name="Ishida S."/>
            <person name="Ono Y."/>
            <person name="Takiguchi S."/>
            <person name="Watanabe S."/>
            <person name="Yosida M."/>
            <person name="Hotuta T."/>
            <person name="Kusano J."/>
            <person name="Kanehori K."/>
            <person name="Takahashi-Fujii A."/>
            <person name="Hara H."/>
            <person name="Tanase T.-O."/>
            <person name="Nomura Y."/>
            <person name="Togiya S."/>
            <person name="Komai F."/>
            <person name="Hara R."/>
            <person name="Takeuchi K."/>
            <person name="Arita M."/>
            <person name="Imose N."/>
            <person name="Musashino K."/>
            <person name="Yuuki H."/>
            <person name="Oshima A."/>
            <person name="Sasaki N."/>
            <person name="Aotsuka S."/>
            <person name="Yoshikawa Y."/>
            <person name="Matsunawa H."/>
            <person name="Ichihara T."/>
            <person name="Shiohata N."/>
            <person name="Sano S."/>
            <person name="Moriya S."/>
            <person name="Momiyama H."/>
            <person name="Satoh N."/>
            <person name="Takami S."/>
            <person name="Terashima Y."/>
            <person name="Suzuki O."/>
            <person name="Nakagawa S."/>
            <person name="Senoh A."/>
            <person name="Mizoguchi H."/>
            <person name="Goto Y."/>
            <person name="Shimizu F."/>
            <person name="Wakebe H."/>
            <person name="Hishigaki H."/>
            <person name="Watanabe T."/>
            <person name="Sugiyama A."/>
            <person name="Takemoto M."/>
            <person name="Kawakami B."/>
            <person name="Yamazaki M."/>
            <person name="Watanabe K."/>
            <person name="Kumagai A."/>
            <person name="Itakura S."/>
            <person name="Fukuzumi Y."/>
            <person name="Fujimori Y."/>
            <person name="Komiyama M."/>
            <person name="Tashiro H."/>
            <person name="Tanigami A."/>
            <person name="Fujiwara T."/>
            <person name="Ono T."/>
            <person name="Yamada K."/>
            <person name="Fujii Y."/>
            <person name="Ozaki K."/>
            <person name="Hirao M."/>
            <person name="Ohmori Y."/>
            <person name="Kawabata A."/>
            <person name="Hikiji T."/>
            <person name="Kobatake N."/>
            <person name="Inagaki H."/>
            <person name="Ikema Y."/>
            <person name="Okamoto S."/>
            <person name="Okitani R."/>
            <person name="Kawakami T."/>
            <person name="Noguchi S."/>
            <person name="Itoh T."/>
            <person name="Shigeta K."/>
            <person name="Senba T."/>
            <person name="Matsumura K."/>
            <person name="Nakajima Y."/>
            <person name="Mizuno T."/>
            <person name="Morinaga M."/>
            <person name="Sasaki M."/>
            <person name="Togashi T."/>
            <person name="Oyama M."/>
            <person name="Hata H."/>
            <person name="Watanabe M."/>
            <person name="Komatsu T."/>
            <person name="Mizushima-Sugano J."/>
            <person name="Satoh T."/>
            <person name="Shirai Y."/>
            <person name="Takahashi Y."/>
            <person name="Nakagawa K."/>
            <person name="Okumura K."/>
            <person name="Nagase T."/>
            <person name="Nomura N."/>
            <person name="Kikuchi H."/>
            <person name="Masuho Y."/>
            <person name="Yamashita R."/>
            <person name="Nakai K."/>
            <person name="Yada T."/>
            <person name="Nakamura Y."/>
            <person name="Ohara O."/>
            <person name="Isogai T."/>
            <person name="Sugano S."/>
        </authorList>
    </citation>
    <scope>NUCLEOTIDE SEQUENCE [LARGE SCALE MRNA] (ISOFORM 2)</scope>
    <source>
        <tissue>Uterus</tissue>
    </source>
</reference>
<reference key="5">
    <citation type="journal article" date="2006" name="Nature">
        <title>The DNA sequence and biological annotation of human chromosome 1.</title>
        <authorList>
            <person name="Gregory S.G."/>
            <person name="Barlow K.F."/>
            <person name="McLay K.E."/>
            <person name="Kaul R."/>
            <person name="Swarbreck D."/>
            <person name="Dunham A."/>
            <person name="Scott C.E."/>
            <person name="Howe K.L."/>
            <person name="Woodfine K."/>
            <person name="Spencer C.C.A."/>
            <person name="Jones M.C."/>
            <person name="Gillson C."/>
            <person name="Searle S."/>
            <person name="Zhou Y."/>
            <person name="Kokocinski F."/>
            <person name="McDonald L."/>
            <person name="Evans R."/>
            <person name="Phillips K."/>
            <person name="Atkinson A."/>
            <person name="Cooper R."/>
            <person name="Jones C."/>
            <person name="Hall R.E."/>
            <person name="Andrews T.D."/>
            <person name="Lloyd C."/>
            <person name="Ainscough R."/>
            <person name="Almeida J.P."/>
            <person name="Ambrose K.D."/>
            <person name="Anderson F."/>
            <person name="Andrew R.W."/>
            <person name="Ashwell R.I.S."/>
            <person name="Aubin K."/>
            <person name="Babbage A.K."/>
            <person name="Bagguley C.L."/>
            <person name="Bailey J."/>
            <person name="Beasley H."/>
            <person name="Bethel G."/>
            <person name="Bird C.P."/>
            <person name="Bray-Allen S."/>
            <person name="Brown J.Y."/>
            <person name="Brown A.J."/>
            <person name="Buckley D."/>
            <person name="Burton J."/>
            <person name="Bye J."/>
            <person name="Carder C."/>
            <person name="Chapman J.C."/>
            <person name="Clark S.Y."/>
            <person name="Clarke G."/>
            <person name="Clee C."/>
            <person name="Cobley V."/>
            <person name="Collier R.E."/>
            <person name="Corby N."/>
            <person name="Coville G.J."/>
            <person name="Davies J."/>
            <person name="Deadman R."/>
            <person name="Dunn M."/>
            <person name="Earthrowl M."/>
            <person name="Ellington A.G."/>
            <person name="Errington H."/>
            <person name="Frankish A."/>
            <person name="Frankland J."/>
            <person name="French L."/>
            <person name="Garner P."/>
            <person name="Garnett J."/>
            <person name="Gay L."/>
            <person name="Ghori M.R.J."/>
            <person name="Gibson R."/>
            <person name="Gilby L.M."/>
            <person name="Gillett W."/>
            <person name="Glithero R.J."/>
            <person name="Grafham D.V."/>
            <person name="Griffiths C."/>
            <person name="Griffiths-Jones S."/>
            <person name="Grocock R."/>
            <person name="Hammond S."/>
            <person name="Harrison E.S.I."/>
            <person name="Hart E."/>
            <person name="Haugen E."/>
            <person name="Heath P.D."/>
            <person name="Holmes S."/>
            <person name="Holt K."/>
            <person name="Howden P.J."/>
            <person name="Hunt A.R."/>
            <person name="Hunt S.E."/>
            <person name="Hunter G."/>
            <person name="Isherwood J."/>
            <person name="James R."/>
            <person name="Johnson C."/>
            <person name="Johnson D."/>
            <person name="Joy A."/>
            <person name="Kay M."/>
            <person name="Kershaw J.K."/>
            <person name="Kibukawa M."/>
            <person name="Kimberley A.M."/>
            <person name="King A."/>
            <person name="Knights A.J."/>
            <person name="Lad H."/>
            <person name="Laird G."/>
            <person name="Lawlor S."/>
            <person name="Leongamornlert D.A."/>
            <person name="Lloyd D.M."/>
            <person name="Loveland J."/>
            <person name="Lovell J."/>
            <person name="Lush M.J."/>
            <person name="Lyne R."/>
            <person name="Martin S."/>
            <person name="Mashreghi-Mohammadi M."/>
            <person name="Matthews L."/>
            <person name="Matthews N.S.W."/>
            <person name="McLaren S."/>
            <person name="Milne S."/>
            <person name="Mistry S."/>
            <person name="Moore M.J.F."/>
            <person name="Nickerson T."/>
            <person name="O'Dell C.N."/>
            <person name="Oliver K."/>
            <person name="Palmeiri A."/>
            <person name="Palmer S.A."/>
            <person name="Parker A."/>
            <person name="Patel D."/>
            <person name="Pearce A.V."/>
            <person name="Peck A.I."/>
            <person name="Pelan S."/>
            <person name="Phelps K."/>
            <person name="Phillimore B.J."/>
            <person name="Plumb R."/>
            <person name="Rajan J."/>
            <person name="Raymond C."/>
            <person name="Rouse G."/>
            <person name="Saenphimmachak C."/>
            <person name="Sehra H.K."/>
            <person name="Sheridan E."/>
            <person name="Shownkeen R."/>
            <person name="Sims S."/>
            <person name="Skuce C.D."/>
            <person name="Smith M."/>
            <person name="Steward C."/>
            <person name="Subramanian S."/>
            <person name="Sycamore N."/>
            <person name="Tracey A."/>
            <person name="Tromans A."/>
            <person name="Van Helmond Z."/>
            <person name="Wall M."/>
            <person name="Wallis J.M."/>
            <person name="White S."/>
            <person name="Whitehead S.L."/>
            <person name="Wilkinson J.E."/>
            <person name="Willey D.L."/>
            <person name="Williams H."/>
            <person name="Wilming L."/>
            <person name="Wray P.W."/>
            <person name="Wu Z."/>
            <person name="Coulson A."/>
            <person name="Vaudin M."/>
            <person name="Sulston J.E."/>
            <person name="Durbin R.M."/>
            <person name="Hubbard T."/>
            <person name="Wooster R."/>
            <person name="Dunham I."/>
            <person name="Carter N.P."/>
            <person name="McVean G."/>
            <person name="Ross M.T."/>
            <person name="Harrow J."/>
            <person name="Olson M.V."/>
            <person name="Beck S."/>
            <person name="Rogers J."/>
            <person name="Bentley D.R."/>
        </authorList>
    </citation>
    <scope>NUCLEOTIDE SEQUENCE [LARGE SCALE GENOMIC DNA]</scope>
</reference>
<reference key="6">
    <citation type="journal article" date="2004" name="Genome Res.">
        <title>The status, quality, and expansion of the NIH full-length cDNA project: the Mammalian Gene Collection (MGC).</title>
        <authorList>
            <consortium name="The MGC Project Team"/>
        </authorList>
    </citation>
    <scope>NUCLEOTIDE SEQUENCE [LARGE SCALE MRNA] (ISOFORM 1)</scope>
    <source>
        <tissue>Brain</tissue>
    </source>
</reference>
<reference key="7">
    <citation type="submission" date="2001-01" db="EMBL/GenBank/DDBJ databases">
        <title>Cloning and characterization of human VDUP1 gene.</title>
        <authorList>
            <person name="Park J.B."/>
        </authorList>
    </citation>
    <scope>NUCLEOTIDE SEQUENCE [GENOMIC DNA] OF 1-38</scope>
</reference>
<reference key="8">
    <citation type="journal article" date="2003" name="Oncogene">
        <title>VDUP1 upregulated by TGF-beta1 and 1,25-dihydorxyvitamin D3 inhibits tumor cell growth by blocking cell-cycle progression.</title>
        <authorList>
            <person name="Han S.H."/>
            <person name="Jeon J.H."/>
            <person name="Ju H.R."/>
            <person name="Jung U."/>
            <person name="Kim K.Y."/>
            <person name="Yoo H.S."/>
            <person name="Lee Y.H."/>
            <person name="Song K.S."/>
            <person name="Hwang H.M."/>
            <person name="Na Y.S."/>
            <person name="Yang Y."/>
            <person name="Lee K.N."/>
            <person name="Choi I."/>
        </authorList>
    </citation>
    <scope>FUNCTION</scope>
    <scope>INDUCTION</scope>
    <scope>INTERACTION WITH ZBTB16; ZBTB32 AND HDAC1</scope>
</reference>
<reference key="9">
    <citation type="journal article" date="2008" name="Biochem. Biophys. Res. Commun.">
        <title>hnRNP G elicits tumor-suppressive activity in part by upregulating the expression of Txnip.</title>
        <authorList>
            <person name="Shin K.H."/>
            <person name="Kim R.H."/>
            <person name="Kim R.H."/>
            <person name="Kang M.K."/>
            <person name="Park N.H."/>
        </authorList>
    </citation>
    <scope>FUNCTION</scope>
</reference>
<reference key="10">
    <citation type="journal article" date="2008" name="Proc. Natl. Acad. Sci. U.S.A.">
        <title>A quantitative atlas of mitotic phosphorylation.</title>
        <authorList>
            <person name="Dephoure N."/>
            <person name="Zhou C."/>
            <person name="Villen J."/>
            <person name="Beausoleil S.A."/>
            <person name="Bakalarski C.E."/>
            <person name="Elledge S.J."/>
            <person name="Gygi S.P."/>
        </authorList>
    </citation>
    <scope>PHOSPHORYLATION [LARGE SCALE ANALYSIS] AT SER-361</scope>
    <scope>IDENTIFICATION BY MASS SPECTROMETRY [LARGE SCALE ANALYSIS]</scope>
    <source>
        <tissue>Cervix carcinoma</tissue>
    </source>
</reference>
<reference key="11">
    <citation type="journal article" date="2010" name="J. Biol. Chem.">
        <title>The ubiquitin ligase itch regulates apoptosis by targeting thioredoxin-interacting protein for ubiquitin-dependent degradation.</title>
        <authorList>
            <person name="Zhang P."/>
            <person name="Wang C."/>
            <person name="Gao K."/>
            <person name="Wang D."/>
            <person name="Mao J."/>
            <person name="An J."/>
            <person name="Xu C."/>
            <person name="Wu D."/>
            <person name="Yu H."/>
            <person name="Liu J.O."/>
            <person name="Yu L."/>
        </authorList>
    </citation>
    <scope>UBIQUITINATION BY ITCH</scope>
</reference>
<reference key="12">
    <citation type="journal article" date="2010" name="Sci. Signal.">
        <title>Quantitative phosphoproteomics reveals widespread full phosphorylation site occupancy during mitosis.</title>
        <authorList>
            <person name="Olsen J.V."/>
            <person name="Vermeulen M."/>
            <person name="Santamaria A."/>
            <person name="Kumar C."/>
            <person name="Miller M.L."/>
            <person name="Jensen L.J."/>
            <person name="Gnad F."/>
            <person name="Cox J."/>
            <person name="Jensen T.S."/>
            <person name="Nigg E.A."/>
            <person name="Brunak S."/>
            <person name="Mann M."/>
        </authorList>
    </citation>
    <scope>IDENTIFICATION BY MASS SPECTROMETRY [LARGE SCALE ANALYSIS]</scope>
    <source>
        <tissue>Cervix carcinoma</tissue>
    </source>
</reference>
<reference key="13">
    <citation type="journal article" date="2011" name="Oncogene">
        <title>TXNIP potentiates Redd1-induced mTOR suppression through stabilization of Redd1.</title>
        <authorList>
            <person name="Jin H.O."/>
            <person name="Seo S.K."/>
            <person name="Kim Y.S."/>
            <person name="Woo S.H."/>
            <person name="Lee K.H."/>
            <person name="Yi J.Y."/>
            <person name="Lee S.J."/>
            <person name="Choe T.B."/>
            <person name="Lee J.H."/>
            <person name="An S."/>
            <person name="Hong S.I."/>
            <person name="Park I.C."/>
        </authorList>
    </citation>
    <scope>FUNCTION</scope>
    <scope>INTERACTION WITH DDIT4</scope>
</reference>
<reference key="14">
    <citation type="journal article" date="2013" name="J. Proteome Res.">
        <title>Toward a comprehensive characterization of a human cancer cell phosphoproteome.</title>
        <authorList>
            <person name="Zhou H."/>
            <person name="Di Palma S."/>
            <person name="Preisinger C."/>
            <person name="Peng M."/>
            <person name="Polat A.N."/>
            <person name="Heck A.J."/>
            <person name="Mohammed S."/>
        </authorList>
    </citation>
    <scope>IDENTIFICATION BY MASS SPECTROMETRY [LARGE SCALE ANALYSIS]</scope>
    <source>
        <tissue>Erythroleukemia</tissue>
    </source>
</reference>
<reference key="15">
    <citation type="journal article" date="2018" name="Proc. Natl. Acad. Sci. U.S.A.">
        <title>K63 ubiquitylation triggers proteasomal degradation by seeding branched ubiquitin chains.</title>
        <authorList>
            <person name="Ohtake F."/>
            <person name="Tsuchiya H."/>
            <person name="Saeki Y."/>
            <person name="Tanaka K."/>
        </authorList>
    </citation>
    <scope>UBIQUITINATION</scope>
</reference>
<reference key="16">
    <citation type="journal article" date="2023" name="Hepatol. Commun.">
        <title>USP5 promotes lipopolysaccharide-induced apoptosis and inflammatory response by stabilizing the TXNIP protein.</title>
        <authorList>
            <person name="Shi S."/>
            <person name="Pan X."/>
            <person name="Chen M."/>
            <person name="Zhang L."/>
            <person name="Zhang S."/>
            <person name="Wang X."/>
            <person name="Shi S."/>
            <person name="Chen Z."/>
            <person name="Lin W."/>
            <person name="Jiang Y."/>
        </authorList>
    </citation>
    <scope>SUBCELLULAR LOCATION</scope>
    <scope>DEUBIQUITINATION BY USP5</scope>
</reference>
<reference key="17">
    <citation type="journal article" date="2013" name="Acta Crystallogr. D">
        <title>Structure of the N-terminal domain of human thioredoxin-interacting protein.</title>
        <authorList>
            <person name="Polekhina G."/>
            <person name="Ascher D.B."/>
            <person name="Kok S.F."/>
            <person name="Beckham S."/>
            <person name="Wilce M."/>
            <person name="Waltham M."/>
        </authorList>
    </citation>
    <scope>X-RAY CRYSTALLOGRAPHY (1.5 ANGSTROMS) OF 2-149</scope>
    <scope>SUBUNIT</scope>
    <scope>INTERCHAIN DISULFIDE BOND</scope>
</reference>
<name>TXNIP_HUMAN</name>
<proteinExistence type="evidence at protein level"/>
<dbReference type="EMBL" id="S73591">
    <property type="protein sequence ID" value="AAB31977.2"/>
    <property type="molecule type" value="mRNA"/>
</dbReference>
<dbReference type="EMBL" id="AY594328">
    <property type="protein sequence ID" value="AAT01927.2"/>
    <property type="molecule type" value="mRNA"/>
</dbReference>
<dbReference type="EMBL" id="AB051901">
    <property type="protein sequence ID" value="BAB18859.1"/>
    <property type="molecule type" value="Genomic_DNA"/>
</dbReference>
<dbReference type="EMBL" id="AK304670">
    <property type="protein sequence ID" value="BAG65445.1"/>
    <property type="molecule type" value="mRNA"/>
</dbReference>
<dbReference type="EMBL" id="AL138842">
    <property type="protein sequence ID" value="CAI22351.1"/>
    <property type="molecule type" value="Genomic_DNA"/>
</dbReference>
<dbReference type="EMBL" id="AL160282">
    <property type="protein sequence ID" value="CAI22351.1"/>
    <property type="status" value="JOINED"/>
    <property type="molecule type" value="Genomic_DNA"/>
</dbReference>
<dbReference type="EMBL" id="BC093702">
    <property type="protein sequence ID" value="AAH93702.1"/>
    <property type="molecule type" value="mRNA"/>
</dbReference>
<dbReference type="EMBL" id="BC093704">
    <property type="protein sequence ID" value="AAH93704.1"/>
    <property type="molecule type" value="mRNA"/>
</dbReference>
<dbReference type="EMBL" id="AF333001">
    <property type="protein sequence ID" value="AAK37514.1"/>
    <property type="molecule type" value="Genomic_DNA"/>
</dbReference>
<dbReference type="CCDS" id="CCDS72876.1">
    <molecule id="Q9H3M7-1"/>
</dbReference>
<dbReference type="CCDS" id="CCDS81368.1">
    <molecule id="Q9H3M7-2"/>
</dbReference>
<dbReference type="RefSeq" id="NP_001300901.1">
    <molecule id="Q9H3M7-2"/>
    <property type="nucleotide sequence ID" value="NM_001313972.2"/>
</dbReference>
<dbReference type="RefSeq" id="NP_006463.3">
    <molecule id="Q9H3M7-1"/>
    <property type="nucleotide sequence ID" value="NM_006472.5"/>
</dbReference>
<dbReference type="PDB" id="4GEI">
    <property type="method" value="X-ray"/>
    <property type="resolution" value="1.50 A"/>
    <property type="chains" value="A=2-149"/>
</dbReference>
<dbReference type="PDB" id="4GEJ">
    <property type="method" value="X-ray"/>
    <property type="resolution" value="2.90 A"/>
    <property type="chains" value="A/B/C/D/E/F/G/H/I/J=2-149"/>
</dbReference>
<dbReference type="PDB" id="4GFX">
    <property type="method" value="X-ray"/>
    <property type="resolution" value="1.60 A"/>
    <property type="chains" value="A=4-154"/>
</dbReference>
<dbReference type="PDB" id="4LL1">
    <property type="method" value="X-ray"/>
    <property type="resolution" value="2.00 A"/>
    <property type="chains" value="A/C=3-317"/>
</dbReference>
<dbReference type="PDB" id="4LL4">
    <property type="method" value="X-ray"/>
    <property type="resolution" value="2.70 A"/>
    <property type="chains" value="A/C=3-317"/>
</dbReference>
<dbReference type="PDB" id="4ROF">
    <property type="method" value="X-ray"/>
    <property type="resolution" value="2.03 A"/>
    <property type="chains" value="C/D=327-338"/>
</dbReference>
<dbReference type="PDB" id="4ROJ">
    <property type="method" value="X-ray"/>
    <property type="resolution" value="1.95 A"/>
    <property type="chains" value="D/E/F=327-338"/>
</dbReference>
<dbReference type="PDB" id="5CQ2">
    <property type="method" value="X-ray"/>
    <property type="resolution" value="1.40 A"/>
    <property type="chains" value="B/C=327-338"/>
</dbReference>
<dbReference type="PDB" id="5DF6">
    <property type="method" value="X-ray"/>
    <property type="resolution" value="1.78 A"/>
    <property type="chains" value="B/C=371-382"/>
</dbReference>
<dbReference type="PDB" id="5DWS">
    <property type="method" value="X-ray"/>
    <property type="resolution" value="1.65 A"/>
    <property type="chains" value="B/D/F/H=327-338"/>
</dbReference>
<dbReference type="PDB" id="5DZD">
    <property type="method" value="X-ray"/>
    <property type="resolution" value="1.57 A"/>
    <property type="chains" value="C/D=327-338"/>
</dbReference>
<dbReference type="PDBsum" id="4GEI"/>
<dbReference type="PDBsum" id="4GEJ"/>
<dbReference type="PDBsum" id="4GFX"/>
<dbReference type="PDBsum" id="4LL1"/>
<dbReference type="PDBsum" id="4LL4"/>
<dbReference type="PDBsum" id="4ROF"/>
<dbReference type="PDBsum" id="4ROJ"/>
<dbReference type="PDBsum" id="5CQ2"/>
<dbReference type="PDBsum" id="5DF6"/>
<dbReference type="PDBsum" id="5DWS"/>
<dbReference type="PDBsum" id="5DZD"/>
<dbReference type="SMR" id="Q9H3M7"/>
<dbReference type="BioGRID" id="115872">
    <property type="interactions" value="213"/>
</dbReference>
<dbReference type="FunCoup" id="Q9H3M7">
    <property type="interactions" value="1256"/>
</dbReference>
<dbReference type="IntAct" id="Q9H3M7">
    <property type="interactions" value="80"/>
</dbReference>
<dbReference type="MINT" id="Q9H3M7"/>
<dbReference type="STRING" id="9606.ENSP00000462521"/>
<dbReference type="TCDB" id="8.A.136.1.14">
    <property type="family name" value="the alpha/beta-arrestin (arrb) family"/>
</dbReference>
<dbReference type="GlyGen" id="Q9H3M7">
    <property type="glycosylation" value="2 sites, 1 O-linked glycan (1 site)"/>
</dbReference>
<dbReference type="iPTMnet" id="Q9H3M7"/>
<dbReference type="PhosphoSitePlus" id="Q9H3M7"/>
<dbReference type="SwissPalm" id="Q9H3M7"/>
<dbReference type="BioMuta" id="TXNIP"/>
<dbReference type="DMDM" id="74752618"/>
<dbReference type="jPOST" id="Q9H3M7"/>
<dbReference type="MassIVE" id="Q9H3M7"/>
<dbReference type="PaxDb" id="9606-ENSP00000462521"/>
<dbReference type="PeptideAtlas" id="Q9H3M7"/>
<dbReference type="ProteomicsDB" id="80731">
    <molecule id="Q9H3M7-1"/>
</dbReference>
<dbReference type="Pumba" id="Q9H3M7"/>
<dbReference type="Antibodypedia" id="73170">
    <property type="antibodies" value="361 antibodies from 35 providers"/>
</dbReference>
<dbReference type="DNASU" id="10628"/>
<dbReference type="Ensembl" id="ENST00000425134.2">
    <molecule id="Q9H3M7-2"/>
    <property type="protein sequence ID" value="ENSP00000396322.2"/>
    <property type="gene ID" value="ENSG00000265972.6"/>
</dbReference>
<dbReference type="Ensembl" id="ENST00000582401.6">
    <molecule id="Q9H3M7-1"/>
    <property type="protein sequence ID" value="ENSP00000462521.1"/>
    <property type="gene ID" value="ENSG00000265972.6"/>
</dbReference>
<dbReference type="GeneID" id="10628"/>
<dbReference type="KEGG" id="hsa:10628"/>
<dbReference type="MANE-Select" id="ENST00000582401.6">
    <property type="protein sequence ID" value="ENSP00000462521.1"/>
    <property type="RefSeq nucleotide sequence ID" value="NM_006472.6"/>
    <property type="RefSeq protein sequence ID" value="NP_006463.3"/>
</dbReference>
<dbReference type="UCSC" id="uc031utq.2">
    <molecule id="Q9H3M7-1"/>
    <property type="organism name" value="human"/>
</dbReference>
<dbReference type="AGR" id="HGNC:16952"/>
<dbReference type="CTD" id="10628"/>
<dbReference type="DisGeNET" id="10628"/>
<dbReference type="GeneCards" id="TXNIP"/>
<dbReference type="HGNC" id="HGNC:16952">
    <property type="gene designation" value="TXNIP"/>
</dbReference>
<dbReference type="HPA" id="ENSG00000265972">
    <property type="expression patterns" value="Low tissue specificity"/>
</dbReference>
<dbReference type="MIM" id="606599">
    <property type="type" value="gene"/>
</dbReference>
<dbReference type="neXtProt" id="NX_Q9H3M7"/>
<dbReference type="OpenTargets" id="ENSG00000265972"/>
<dbReference type="PharmGKB" id="PA38194"/>
<dbReference type="VEuPathDB" id="HostDB:ENSG00000265972"/>
<dbReference type="eggNOG" id="KOG3780">
    <property type="taxonomic scope" value="Eukaryota"/>
</dbReference>
<dbReference type="GeneTree" id="ENSGT00940000158522"/>
<dbReference type="HOGENOM" id="CLU_039221_1_1_1"/>
<dbReference type="InParanoid" id="Q9H3M7"/>
<dbReference type="OMA" id="TKKYFEV"/>
<dbReference type="OrthoDB" id="2333384at2759"/>
<dbReference type="PAN-GO" id="Q9H3M7">
    <property type="GO annotations" value="3 GO annotations based on evolutionary models"/>
</dbReference>
<dbReference type="PhylomeDB" id="Q9H3M7"/>
<dbReference type="TreeFam" id="TF313650"/>
<dbReference type="PathwayCommons" id="Q9H3M7"/>
<dbReference type="Reactome" id="R-HSA-844456">
    <property type="pathway name" value="The NLRP3 inflammasome"/>
</dbReference>
<dbReference type="Reactome" id="R-HSA-9617629">
    <property type="pathway name" value="Regulation of FOXO transcriptional activity by acetylation"/>
</dbReference>
<dbReference type="Reactome" id="R-HSA-9660826">
    <property type="pathway name" value="Purinergic signaling in leishmaniasis infection"/>
</dbReference>
<dbReference type="Reactome" id="R-HSA-9707564">
    <property type="pathway name" value="Cytoprotection by HMOX1"/>
</dbReference>
<dbReference type="SignaLink" id="Q9H3M7"/>
<dbReference type="SIGNOR" id="Q9H3M7"/>
<dbReference type="BioGRID-ORCS" id="10628">
    <property type="hits" value="16 hits in 1161 CRISPR screens"/>
</dbReference>
<dbReference type="ChiTaRS" id="TXNIP">
    <property type="organism name" value="human"/>
</dbReference>
<dbReference type="EvolutionaryTrace" id="Q9H3M7"/>
<dbReference type="GeneWiki" id="TXNIP"/>
<dbReference type="GenomeRNAi" id="10628"/>
<dbReference type="Pharos" id="Q9H3M7">
    <property type="development level" value="Tbio"/>
</dbReference>
<dbReference type="PRO" id="PR:Q9H3M7"/>
<dbReference type="Proteomes" id="UP000005640">
    <property type="component" value="Chromosome 1"/>
</dbReference>
<dbReference type="RNAct" id="Q9H3M7">
    <property type="molecule type" value="protein"/>
</dbReference>
<dbReference type="Bgee" id="ENSG00000265972">
    <property type="expression patterns" value="Expressed in right lung and 209 other cell types or tissues"/>
</dbReference>
<dbReference type="GO" id="GO:0005737">
    <property type="term" value="C:cytoplasm"/>
    <property type="evidence" value="ECO:0000314"/>
    <property type="project" value="UniProtKB"/>
</dbReference>
<dbReference type="GO" id="GO:0005829">
    <property type="term" value="C:cytosol"/>
    <property type="evidence" value="ECO:0000304"/>
    <property type="project" value="Reactome"/>
</dbReference>
<dbReference type="GO" id="GO:0004857">
    <property type="term" value="F:enzyme inhibitor activity"/>
    <property type="evidence" value="ECO:0000314"/>
    <property type="project" value="UniProtKB"/>
</dbReference>
<dbReference type="GO" id="GO:0031625">
    <property type="term" value="F:ubiquitin protein ligase binding"/>
    <property type="evidence" value="ECO:0000353"/>
    <property type="project" value="UniProtKB"/>
</dbReference>
<dbReference type="GO" id="GO:0140052">
    <property type="term" value="P:cellular response to oxidised low-density lipoprotein particle stimulus"/>
    <property type="evidence" value="ECO:0000304"/>
    <property type="project" value="ARUK-UCL"/>
</dbReference>
<dbReference type="GO" id="GO:0071228">
    <property type="term" value="P:cellular response to tumor cell"/>
    <property type="evidence" value="ECO:0000314"/>
    <property type="project" value="UniProtKB"/>
</dbReference>
<dbReference type="GO" id="GO:0006954">
    <property type="term" value="P:inflammatory response"/>
    <property type="evidence" value="ECO:0000304"/>
    <property type="project" value="ARUK-UCL"/>
</dbReference>
<dbReference type="GO" id="GO:0030216">
    <property type="term" value="P:keratinocyte differentiation"/>
    <property type="evidence" value="ECO:0000314"/>
    <property type="project" value="UniProtKB"/>
</dbReference>
<dbReference type="GO" id="GO:0051782">
    <property type="term" value="P:negative regulation of cell division"/>
    <property type="evidence" value="ECO:0000314"/>
    <property type="project" value="UniProtKB"/>
</dbReference>
<dbReference type="GO" id="GO:0000122">
    <property type="term" value="P:negative regulation of transcription by RNA polymerase II"/>
    <property type="evidence" value="ECO:0007669"/>
    <property type="project" value="Ensembl"/>
</dbReference>
<dbReference type="GO" id="GO:0048008">
    <property type="term" value="P:platelet-derived growth factor receptor signaling pathway"/>
    <property type="evidence" value="ECO:0007669"/>
    <property type="project" value="Ensembl"/>
</dbReference>
<dbReference type="GO" id="GO:0043065">
    <property type="term" value="P:positive regulation of apoptotic process"/>
    <property type="evidence" value="ECO:0007669"/>
    <property type="project" value="Ensembl"/>
</dbReference>
<dbReference type="GO" id="GO:0006606">
    <property type="term" value="P:protein import into nucleus"/>
    <property type="evidence" value="ECO:0007669"/>
    <property type="project" value="Ensembl"/>
</dbReference>
<dbReference type="GO" id="GO:0015031">
    <property type="term" value="P:protein transport"/>
    <property type="evidence" value="ECO:0000318"/>
    <property type="project" value="GO_Central"/>
</dbReference>
<dbReference type="GO" id="GO:0042127">
    <property type="term" value="P:regulation of cell population proliferation"/>
    <property type="evidence" value="ECO:0007669"/>
    <property type="project" value="Ensembl"/>
</dbReference>
<dbReference type="GO" id="GO:0051592">
    <property type="term" value="P:response to calcium ion"/>
    <property type="evidence" value="ECO:0007669"/>
    <property type="project" value="Ensembl"/>
</dbReference>
<dbReference type="GO" id="GO:0032355">
    <property type="term" value="P:response to estradiol"/>
    <property type="evidence" value="ECO:0007669"/>
    <property type="project" value="Ensembl"/>
</dbReference>
<dbReference type="GO" id="GO:0009749">
    <property type="term" value="P:response to glucose"/>
    <property type="evidence" value="ECO:0007669"/>
    <property type="project" value="Ensembl"/>
</dbReference>
<dbReference type="GO" id="GO:0042542">
    <property type="term" value="P:response to hydrogen peroxide"/>
    <property type="evidence" value="ECO:0007669"/>
    <property type="project" value="Ensembl"/>
</dbReference>
<dbReference type="GO" id="GO:0009612">
    <property type="term" value="P:response to mechanical stimulus"/>
    <property type="evidence" value="ECO:0007669"/>
    <property type="project" value="Ensembl"/>
</dbReference>
<dbReference type="GO" id="GO:0006979">
    <property type="term" value="P:response to oxidative stress"/>
    <property type="evidence" value="ECO:0000314"/>
    <property type="project" value="UniProtKB"/>
</dbReference>
<dbReference type="GO" id="GO:0032570">
    <property type="term" value="P:response to progesterone"/>
    <property type="evidence" value="ECO:0007669"/>
    <property type="project" value="Ensembl"/>
</dbReference>
<dbReference type="GO" id="GO:0009410">
    <property type="term" value="P:response to xenobiotic stimulus"/>
    <property type="evidence" value="ECO:0007669"/>
    <property type="project" value="Ensembl"/>
</dbReference>
<dbReference type="FunFam" id="2.60.40.640:FF:000016">
    <property type="entry name" value="thioredoxin-interacting protein-like"/>
    <property type="match status" value="1"/>
</dbReference>
<dbReference type="FunFam" id="2.60.40.640:FF:000017">
    <property type="entry name" value="thioredoxin-interacting protein-like"/>
    <property type="match status" value="1"/>
</dbReference>
<dbReference type="Gene3D" id="2.60.40.640">
    <property type="match status" value="2"/>
</dbReference>
<dbReference type="InterPro" id="IPR014752">
    <property type="entry name" value="Arrestin-like_C"/>
</dbReference>
<dbReference type="InterPro" id="IPR011021">
    <property type="entry name" value="Arrestin-like_N"/>
</dbReference>
<dbReference type="InterPro" id="IPR011022">
    <property type="entry name" value="Arrestin_C-like"/>
</dbReference>
<dbReference type="InterPro" id="IPR050357">
    <property type="entry name" value="Arrestin_domain-protein"/>
</dbReference>
<dbReference type="InterPro" id="IPR014756">
    <property type="entry name" value="Ig_E-set"/>
</dbReference>
<dbReference type="PANTHER" id="PTHR11188">
    <property type="entry name" value="ARRESTIN DOMAIN CONTAINING PROTEIN"/>
    <property type="match status" value="1"/>
</dbReference>
<dbReference type="PANTHER" id="PTHR11188:SF14">
    <property type="entry name" value="THIOREDOXIN-INTERACTING PROTEIN"/>
    <property type="match status" value="1"/>
</dbReference>
<dbReference type="Pfam" id="PF02752">
    <property type="entry name" value="Arrestin_C"/>
    <property type="match status" value="1"/>
</dbReference>
<dbReference type="Pfam" id="PF00339">
    <property type="entry name" value="Arrestin_N"/>
    <property type="match status" value="1"/>
</dbReference>
<dbReference type="SMART" id="SM01017">
    <property type="entry name" value="Arrestin_C"/>
    <property type="match status" value="1"/>
</dbReference>
<dbReference type="SUPFAM" id="SSF81296">
    <property type="entry name" value="E set domains"/>
    <property type="match status" value="2"/>
</dbReference>
<organism>
    <name type="scientific">Homo sapiens</name>
    <name type="common">Human</name>
    <dbReference type="NCBI Taxonomy" id="9606"/>
    <lineage>
        <taxon>Eukaryota</taxon>
        <taxon>Metazoa</taxon>
        <taxon>Chordata</taxon>
        <taxon>Craniata</taxon>
        <taxon>Vertebrata</taxon>
        <taxon>Euteleostomi</taxon>
        <taxon>Mammalia</taxon>
        <taxon>Eutheria</taxon>
        <taxon>Euarchontoglires</taxon>
        <taxon>Primates</taxon>
        <taxon>Haplorrhini</taxon>
        <taxon>Catarrhini</taxon>
        <taxon>Hominidae</taxon>
        <taxon>Homo</taxon>
    </lineage>
</organism>
<accession>Q9H3M7</accession>
<accession>B4E3D3</accession>
<accession>Q16226</accession>
<accession>Q6PML0</accession>
<accession>Q9BXG9</accession>
<comment type="function">
    <text evidence="1 2 3 4 6">May act as an oxidative stress mediator by inhibiting thioredoxin activity or by limiting its bioavailability (PubMed:17603038). Interacts with COPS5 and restores COPS5-induced suppression of CDKN1B stability, blocking the COPS5-mediated translocation of CDKN1B from the nucleus to the cytoplasm (By similarity). Functions as a transcriptional repressor, possibly by acting as a bridge molecule between transcription factors and corepressor complexes, and over-expression will induce G0/G1 cell cycle arrest (PubMed:12821938). Required for the maturation of natural killer cells (By similarity). Acts as a suppressor of tumor cell growth (PubMed:18541147). Inhibits the proteasomal degradation of DDIT4, and thereby contributes to the inhibition of the mammalian target of rapamycin complex 1 (mTORC1) (PubMed:21460850).</text>
</comment>
<comment type="subunit">
    <text evidence="2 3 6 7">Homodimer; disulfide-linked (PubMed:23519408). Interacts with TXN/thioredoxin through its redox-active site (PubMed:17603038). Interacts with transcriptional repressors ZBTB16, ZBTB32 and HDAC1 (PubMed:12821938). Interacts with DDIT4 (PubMed:21460850).</text>
</comment>
<comment type="interaction">
    <interactant intactId="EBI-1369170">
        <id>Q9H3M7</id>
    </interactant>
    <interactant intactId="EBI-2557598">
        <id>O95905</id>
        <label>ECD</label>
    </interactant>
    <organismsDiffer>false</organismsDiffer>
    <experiments>6</experiments>
</comment>
<comment type="interaction">
    <interactant intactId="EBI-1369170">
        <id>Q9H3M7</id>
    </interactant>
    <interactant intactId="EBI-301821">
        <id>Q92769</id>
        <label>HDAC2</label>
    </interactant>
    <organismsDiffer>false</organismsDiffer>
    <experiments>3</experiments>
</comment>
<comment type="interaction">
    <interactant intactId="EBI-1369170">
        <id>Q9H3M7</id>
    </interactant>
    <interactant intactId="EBI-594644">
        <id>P10599</id>
        <label>TXN</label>
    </interactant>
    <organismsDiffer>false</organismsDiffer>
    <experiments>8</experiments>
</comment>
<comment type="interaction">
    <interactant intactId="EBI-1369170">
        <id>Q9H3M7</id>
    </interactant>
    <interactant intactId="EBI-297549">
        <id>P52735</id>
        <label>VAV2</label>
    </interactant>
    <organismsDiffer>false</organismsDiffer>
    <experiments>2</experiments>
</comment>
<comment type="subcellular location">
    <subcellularLocation>
        <location evidence="9">Cytoplasm</location>
    </subcellularLocation>
    <subcellularLocation>
        <location evidence="9">Nucleus</location>
    </subcellularLocation>
</comment>
<comment type="alternative products">
    <event type="alternative splicing"/>
    <isoform>
        <id>Q9H3M7-1</id>
        <name>1</name>
        <sequence type="displayed"/>
    </isoform>
    <isoform>
        <id>Q9H3M7-2</id>
        <name>2</name>
        <sequence type="described" ref="VSP_054401"/>
    </isoform>
</comment>
<comment type="induction">
    <text evidence="2 3 10">By 1,25-dihydroxyvitamin D-3 and TGFB1. Down-regulated in response to oxidative stress.</text>
</comment>
<comment type="PTM">
    <text evidence="5 8 9">Ubiquitinated; undergoes heterotypic 'Lys-48'-/'Lys-63'-branched polyubiquitination catalyzed by ITCH and UBR5 resulting in proteasomal degradation (PubMed:29378950). Deubiquitinated by USP5, leading to TXNIP stabilization (PubMed:37534934).</text>
</comment>
<comment type="similarity">
    <text evidence="12">Belongs to the arrestin family.</text>
</comment>
<feature type="chain" id="PRO_0000250489" description="Thioredoxin-interacting protein">
    <location>
        <begin position="1"/>
        <end position="391"/>
    </location>
</feature>
<feature type="modified residue" description="Phosphoserine" evidence="13">
    <location>
        <position position="361"/>
    </location>
</feature>
<feature type="disulfide bond" description="Interchain" evidence="7">
    <location>
        <position position="63"/>
    </location>
</feature>
<feature type="cross-link" description="Glycyl lysine isopeptide (Lys-Gly) (interchain with G-Cter in ubiquitin)" evidence="5">
    <location>
        <position position="212"/>
    </location>
</feature>
<feature type="splice variant" id="VSP_054401" description="In isoform 2." evidence="11">
    <original>MVMFKKIKSFEVVFNDPEKVYGSGEKVAGRVIVEVCEVTRVKAVRILACGVAKVLWMQGSQQCKQTSEYLRYEDTLLLEDQPT</original>
    <variation>MPPKHSLSHRCILSVTASLMATRFSFPS</variation>
    <location>
        <begin position="1"/>
        <end position="83"/>
    </location>
</feature>
<feature type="sequence variant" id="VAR_048334" description="In dbSNP:rs6674773.">
    <original>R</original>
    <variation>Q</variation>
    <location>
        <position position="177"/>
    </location>
</feature>
<feature type="sequence conflict" description="In Ref. 1; AAB31977 and 2; AAT01927." evidence="12" ref="1 2">
    <original>K</original>
    <variation>R</variation>
    <location>
        <position position="26"/>
    </location>
</feature>
<feature type="strand" evidence="14">
    <location>
        <begin position="8"/>
        <end position="16"/>
    </location>
</feature>
<feature type="strand" evidence="14">
    <location>
        <begin position="20"/>
        <end position="22"/>
    </location>
</feature>
<feature type="strand" evidence="14">
    <location>
        <begin position="26"/>
        <end position="34"/>
    </location>
</feature>
<feature type="strand" evidence="14">
    <location>
        <begin position="39"/>
        <end position="41"/>
    </location>
</feature>
<feature type="strand" evidence="14">
    <location>
        <begin position="43"/>
        <end position="58"/>
    </location>
</feature>
<feature type="strand" evidence="14">
    <location>
        <begin position="61"/>
        <end position="76"/>
    </location>
</feature>
<feature type="strand" evidence="14">
    <location>
        <begin position="79"/>
        <end position="81"/>
    </location>
</feature>
<feature type="strand" evidence="15">
    <location>
        <begin position="83"/>
        <end position="85"/>
    </location>
</feature>
<feature type="strand" evidence="14">
    <location>
        <begin position="89"/>
        <end position="91"/>
    </location>
</feature>
<feature type="strand" evidence="18">
    <location>
        <begin position="93"/>
        <end position="95"/>
    </location>
</feature>
<feature type="strand" evidence="14">
    <location>
        <begin position="97"/>
        <end position="104"/>
    </location>
</feature>
<feature type="strand" evidence="16">
    <location>
        <begin position="111"/>
        <end position="114"/>
    </location>
</feature>
<feature type="strand" evidence="14">
    <location>
        <begin position="116"/>
        <end position="130"/>
    </location>
</feature>
<feature type="strand" evidence="14">
    <location>
        <begin position="137"/>
        <end position="142"/>
    </location>
</feature>
<feature type="strand" evidence="14">
    <location>
        <begin position="144"/>
        <end position="146"/>
    </location>
</feature>
<feature type="strand" evidence="16">
    <location>
        <begin position="148"/>
        <end position="150"/>
    </location>
</feature>
<feature type="strand" evidence="17">
    <location>
        <begin position="160"/>
        <end position="167"/>
    </location>
</feature>
<feature type="strand" evidence="17">
    <location>
        <begin position="177"/>
        <end position="185"/>
    </location>
</feature>
<feature type="strand" evidence="17">
    <location>
        <begin position="187"/>
        <end position="190"/>
    </location>
</feature>
<feature type="strand" evidence="17">
    <location>
        <begin position="194"/>
        <end position="203"/>
    </location>
</feature>
<feature type="strand" evidence="17">
    <location>
        <begin position="205"/>
        <end position="207"/>
    </location>
</feature>
<feature type="strand" evidence="17">
    <location>
        <begin position="209"/>
        <end position="223"/>
    </location>
</feature>
<feature type="strand" evidence="17">
    <location>
        <begin position="226"/>
        <end position="238"/>
    </location>
</feature>
<feature type="strand" evidence="17">
    <location>
        <begin position="246"/>
        <end position="256"/>
    </location>
</feature>
<feature type="strand" evidence="17">
    <location>
        <begin position="269"/>
        <end position="281"/>
    </location>
</feature>
<feature type="strand" evidence="17">
    <location>
        <begin position="288"/>
        <end position="298"/>
    </location>
</feature>
<feature type="helix" evidence="19">
    <location>
        <begin position="334"/>
        <end position="337"/>
    </location>
</feature>
<evidence type="ECO:0000250" key="1">
    <source>
        <dbReference type="UniProtKB" id="Q8BG60"/>
    </source>
</evidence>
<evidence type="ECO:0000269" key="2">
    <source>
    </source>
</evidence>
<evidence type="ECO:0000269" key="3">
    <source>
    </source>
</evidence>
<evidence type="ECO:0000269" key="4">
    <source>
    </source>
</evidence>
<evidence type="ECO:0000269" key="5">
    <source>
    </source>
</evidence>
<evidence type="ECO:0000269" key="6">
    <source>
    </source>
</evidence>
<evidence type="ECO:0000269" key="7">
    <source>
    </source>
</evidence>
<evidence type="ECO:0000269" key="8">
    <source>
    </source>
</evidence>
<evidence type="ECO:0000269" key="9">
    <source>
    </source>
</evidence>
<evidence type="ECO:0000269" key="10">
    <source>
    </source>
</evidence>
<evidence type="ECO:0000303" key="11">
    <source>
    </source>
</evidence>
<evidence type="ECO:0000305" key="12"/>
<evidence type="ECO:0007744" key="13">
    <source>
    </source>
</evidence>
<evidence type="ECO:0007829" key="14">
    <source>
        <dbReference type="PDB" id="4GEI"/>
    </source>
</evidence>
<evidence type="ECO:0007829" key="15">
    <source>
        <dbReference type="PDB" id="4GEJ"/>
    </source>
</evidence>
<evidence type="ECO:0007829" key="16">
    <source>
        <dbReference type="PDB" id="4GFX"/>
    </source>
</evidence>
<evidence type="ECO:0007829" key="17">
    <source>
        <dbReference type="PDB" id="4LL1"/>
    </source>
</evidence>
<evidence type="ECO:0007829" key="18">
    <source>
        <dbReference type="PDB" id="4LL4"/>
    </source>
</evidence>
<evidence type="ECO:0007829" key="19">
    <source>
        <dbReference type="PDB" id="5CQ2"/>
    </source>
</evidence>
<sequence>MVMFKKIKSFEVVFNDPEKVYGSGEKVAGRVIVEVCEVTRVKAVRILACGVAKVLWMQGSQQCKQTSEYLRYEDTLLLEDQPTGENEMVIMRPGNKYEYKFGFELPQGPLGTSFKGKYGCVDYWVKAFLDRPSQPTQETKKNFEVVDLVDVNTPDLMAPVSAKKEKKVSCMFIPDGRVSVSARIDRKGFCEGDEISIHADFENTCSRIVVPKAAIVARHTYLANGQTKVLTQKLSSVRGNHIISGTCASWRGKSLRVQKIRPSILGCNILRVEYSLLIYVSVPGSKKVILDLPLVIGSRSGLSSRTSSMASRTSSEMSWVDLNIPDTPEAPPCYMDVIPEDHRLESPTTPLLDDMDGSQDSPIFMYAPEFKFMPPPTYTEVDPCILNNNVQ</sequence>
<protein>
    <recommendedName>
        <fullName>Thioredoxin-interacting protein</fullName>
    </recommendedName>
    <alternativeName>
        <fullName>Thioredoxin-binding protein 2</fullName>
    </alternativeName>
    <alternativeName>
        <fullName>Vitamin D3 up-regulated protein 1</fullName>
    </alternativeName>
</protein>
<keyword id="KW-0002">3D-structure</keyword>
<keyword id="KW-0025">Alternative splicing</keyword>
<keyword id="KW-0131">Cell cycle</keyword>
<keyword id="KW-0963">Cytoplasm</keyword>
<keyword id="KW-1015">Disulfide bond</keyword>
<keyword id="KW-1017">Isopeptide bond</keyword>
<keyword id="KW-0539">Nucleus</keyword>
<keyword id="KW-0597">Phosphoprotein</keyword>
<keyword id="KW-1267">Proteomics identification</keyword>
<keyword id="KW-1185">Reference proteome</keyword>
<keyword id="KW-0804">Transcription</keyword>
<keyword id="KW-0805">Transcription regulation</keyword>
<keyword id="KW-0043">Tumor suppressor</keyword>
<keyword id="KW-0832">Ubl conjugation</keyword>